<name>RS17_RHIEC</name>
<evidence type="ECO:0000255" key="1">
    <source>
        <dbReference type="HAMAP-Rule" id="MF_01345"/>
    </source>
</evidence>
<evidence type="ECO:0000305" key="2"/>
<gene>
    <name evidence="1" type="primary">rpsQ</name>
    <name type="ordered locus">RHE_CH01684</name>
</gene>
<feature type="chain" id="PRO_0000255691" description="Small ribosomal subunit protein uS17">
    <location>
        <begin position="1"/>
        <end position="79"/>
    </location>
</feature>
<accession>Q2K9K7</accession>
<protein>
    <recommendedName>
        <fullName evidence="1">Small ribosomal subunit protein uS17</fullName>
    </recommendedName>
    <alternativeName>
        <fullName evidence="2">30S ribosomal protein S17</fullName>
    </alternativeName>
</protein>
<proteinExistence type="inferred from homology"/>
<organism>
    <name type="scientific">Rhizobium etli (strain ATCC 51251 / DSM 11541 / JCM 21823 / NBRC 15573 / CFN 42)</name>
    <dbReference type="NCBI Taxonomy" id="347834"/>
    <lineage>
        <taxon>Bacteria</taxon>
        <taxon>Pseudomonadati</taxon>
        <taxon>Pseudomonadota</taxon>
        <taxon>Alphaproteobacteria</taxon>
        <taxon>Hyphomicrobiales</taxon>
        <taxon>Rhizobiaceae</taxon>
        <taxon>Rhizobium/Agrobacterium group</taxon>
        <taxon>Rhizobium</taxon>
    </lineage>
</organism>
<keyword id="KW-1185">Reference proteome</keyword>
<keyword id="KW-0687">Ribonucleoprotein</keyword>
<keyword id="KW-0689">Ribosomal protein</keyword>
<keyword id="KW-0694">RNA-binding</keyword>
<keyword id="KW-0699">rRNA-binding</keyword>
<sequence length="79" mass="9089">MPKRILQGVVVGDKNEKTVVVRVERRFAHPLLQKTVRRSKKYKAHDENNEYKIGDTVSIEECAPISKDKRWTVIAAQGK</sequence>
<reference key="1">
    <citation type="journal article" date="2006" name="Proc. Natl. Acad. Sci. U.S.A.">
        <title>The partitioned Rhizobium etli genome: genetic and metabolic redundancy in seven interacting replicons.</title>
        <authorList>
            <person name="Gonzalez V."/>
            <person name="Santamaria R.I."/>
            <person name="Bustos P."/>
            <person name="Hernandez-Gonzalez I."/>
            <person name="Medrano-Soto A."/>
            <person name="Moreno-Hagelsieb G."/>
            <person name="Janga S.C."/>
            <person name="Ramirez M.A."/>
            <person name="Jimenez-Jacinto V."/>
            <person name="Collado-Vides J."/>
            <person name="Davila G."/>
        </authorList>
    </citation>
    <scope>NUCLEOTIDE SEQUENCE [LARGE SCALE GENOMIC DNA]</scope>
    <source>
        <strain>ATCC 51251 / DSM 11541 / JCM 21823 / NBRC 15573 / CFN 42</strain>
    </source>
</reference>
<dbReference type="EMBL" id="CP000133">
    <property type="protein sequence ID" value="ABC90479.1"/>
    <property type="molecule type" value="Genomic_DNA"/>
</dbReference>
<dbReference type="RefSeq" id="WP_011424984.1">
    <property type="nucleotide sequence ID" value="NC_007761.1"/>
</dbReference>
<dbReference type="SMR" id="Q2K9K7"/>
<dbReference type="KEGG" id="ret:RHE_CH01684"/>
<dbReference type="eggNOG" id="COG0186">
    <property type="taxonomic scope" value="Bacteria"/>
</dbReference>
<dbReference type="HOGENOM" id="CLU_073626_1_1_5"/>
<dbReference type="OrthoDB" id="9811714at2"/>
<dbReference type="Proteomes" id="UP000001936">
    <property type="component" value="Chromosome"/>
</dbReference>
<dbReference type="GO" id="GO:0022627">
    <property type="term" value="C:cytosolic small ribosomal subunit"/>
    <property type="evidence" value="ECO:0007669"/>
    <property type="project" value="TreeGrafter"/>
</dbReference>
<dbReference type="GO" id="GO:0019843">
    <property type="term" value="F:rRNA binding"/>
    <property type="evidence" value="ECO:0007669"/>
    <property type="project" value="UniProtKB-UniRule"/>
</dbReference>
<dbReference type="GO" id="GO:0003735">
    <property type="term" value="F:structural constituent of ribosome"/>
    <property type="evidence" value="ECO:0007669"/>
    <property type="project" value="InterPro"/>
</dbReference>
<dbReference type="GO" id="GO:0006412">
    <property type="term" value="P:translation"/>
    <property type="evidence" value="ECO:0007669"/>
    <property type="project" value="UniProtKB-UniRule"/>
</dbReference>
<dbReference type="CDD" id="cd00364">
    <property type="entry name" value="Ribosomal_uS17"/>
    <property type="match status" value="1"/>
</dbReference>
<dbReference type="Gene3D" id="2.40.50.140">
    <property type="entry name" value="Nucleic acid-binding proteins"/>
    <property type="match status" value="1"/>
</dbReference>
<dbReference type="HAMAP" id="MF_01345_B">
    <property type="entry name" value="Ribosomal_uS17_B"/>
    <property type="match status" value="1"/>
</dbReference>
<dbReference type="InterPro" id="IPR012340">
    <property type="entry name" value="NA-bd_OB-fold"/>
</dbReference>
<dbReference type="InterPro" id="IPR000266">
    <property type="entry name" value="Ribosomal_uS17"/>
</dbReference>
<dbReference type="InterPro" id="IPR019984">
    <property type="entry name" value="Ribosomal_uS17_bact/chlr"/>
</dbReference>
<dbReference type="NCBIfam" id="NF004123">
    <property type="entry name" value="PRK05610.1"/>
    <property type="match status" value="1"/>
</dbReference>
<dbReference type="NCBIfam" id="TIGR03635">
    <property type="entry name" value="uS17_bact"/>
    <property type="match status" value="1"/>
</dbReference>
<dbReference type="PANTHER" id="PTHR10744">
    <property type="entry name" value="40S RIBOSOMAL PROTEIN S11 FAMILY MEMBER"/>
    <property type="match status" value="1"/>
</dbReference>
<dbReference type="PANTHER" id="PTHR10744:SF1">
    <property type="entry name" value="SMALL RIBOSOMAL SUBUNIT PROTEIN US17M"/>
    <property type="match status" value="1"/>
</dbReference>
<dbReference type="Pfam" id="PF00366">
    <property type="entry name" value="Ribosomal_S17"/>
    <property type="match status" value="1"/>
</dbReference>
<dbReference type="PRINTS" id="PR00973">
    <property type="entry name" value="RIBOSOMALS17"/>
</dbReference>
<dbReference type="SUPFAM" id="SSF50249">
    <property type="entry name" value="Nucleic acid-binding proteins"/>
    <property type="match status" value="1"/>
</dbReference>
<comment type="function">
    <text evidence="1">One of the primary rRNA binding proteins, it binds specifically to the 5'-end of 16S ribosomal RNA.</text>
</comment>
<comment type="subunit">
    <text evidence="1">Part of the 30S ribosomal subunit.</text>
</comment>
<comment type="similarity">
    <text evidence="1">Belongs to the universal ribosomal protein uS17 family.</text>
</comment>